<reference key="1">
    <citation type="journal article" date="2009" name="J. Bacteriol.">
        <title>Complete and draft genome sequences of six members of the Aquificales.</title>
        <authorList>
            <person name="Reysenbach A.-L."/>
            <person name="Hamamura N."/>
            <person name="Podar M."/>
            <person name="Griffiths E."/>
            <person name="Ferreira S."/>
            <person name="Hochstein R."/>
            <person name="Heidelberg J."/>
            <person name="Johnson J."/>
            <person name="Mead D."/>
            <person name="Pohorille A."/>
            <person name="Sarmiento M."/>
            <person name="Schweighofer K."/>
            <person name="Seshadri R."/>
            <person name="Voytek M.A."/>
        </authorList>
    </citation>
    <scope>NUCLEOTIDE SEQUENCE [LARGE SCALE GENOMIC DNA]</scope>
    <source>
        <strain>YO3AOP1</strain>
    </source>
</reference>
<feature type="chain" id="PRO_1000095172" description="Glutamyl-tRNA(Gln) amidotransferase subunit A">
    <location>
        <begin position="1"/>
        <end position="485"/>
    </location>
</feature>
<feature type="active site" description="Charge relay system" evidence="1">
    <location>
        <position position="79"/>
    </location>
</feature>
<feature type="active site" description="Charge relay system" evidence="1">
    <location>
        <position position="154"/>
    </location>
</feature>
<feature type="active site" description="Acyl-ester intermediate" evidence="1">
    <location>
        <position position="178"/>
    </location>
</feature>
<protein>
    <recommendedName>
        <fullName evidence="1">Glutamyl-tRNA(Gln) amidotransferase subunit A</fullName>
        <shortName evidence="1">Glu-ADT subunit A</shortName>
        <ecNumber evidence="1">6.3.5.7</ecNumber>
    </recommendedName>
</protein>
<gene>
    <name evidence="1" type="primary">gatA</name>
    <name type="ordered locus">SYO3AOP1_0487</name>
</gene>
<evidence type="ECO:0000255" key="1">
    <source>
        <dbReference type="HAMAP-Rule" id="MF_00120"/>
    </source>
</evidence>
<proteinExistence type="inferred from homology"/>
<accession>B2V855</accession>
<keyword id="KW-0067">ATP-binding</keyword>
<keyword id="KW-0436">Ligase</keyword>
<keyword id="KW-0547">Nucleotide-binding</keyword>
<keyword id="KW-0648">Protein biosynthesis</keyword>
<dbReference type="EC" id="6.3.5.7" evidence="1"/>
<dbReference type="EMBL" id="CP001080">
    <property type="protein sequence ID" value="ACD66128.1"/>
    <property type="molecule type" value="Genomic_DNA"/>
</dbReference>
<dbReference type="RefSeq" id="WP_012459209.1">
    <property type="nucleotide sequence ID" value="NC_010730.1"/>
</dbReference>
<dbReference type="SMR" id="B2V855"/>
<dbReference type="STRING" id="436114.SYO3AOP1_0487"/>
<dbReference type="KEGG" id="sul:SYO3AOP1_0487"/>
<dbReference type="eggNOG" id="COG0154">
    <property type="taxonomic scope" value="Bacteria"/>
</dbReference>
<dbReference type="HOGENOM" id="CLU_009600_0_3_0"/>
<dbReference type="GO" id="GO:0030956">
    <property type="term" value="C:glutamyl-tRNA(Gln) amidotransferase complex"/>
    <property type="evidence" value="ECO:0007669"/>
    <property type="project" value="InterPro"/>
</dbReference>
<dbReference type="GO" id="GO:0005524">
    <property type="term" value="F:ATP binding"/>
    <property type="evidence" value="ECO:0007669"/>
    <property type="project" value="UniProtKB-KW"/>
</dbReference>
<dbReference type="GO" id="GO:0050567">
    <property type="term" value="F:glutaminyl-tRNA synthase (glutamine-hydrolyzing) activity"/>
    <property type="evidence" value="ECO:0007669"/>
    <property type="project" value="UniProtKB-UniRule"/>
</dbReference>
<dbReference type="GO" id="GO:0006412">
    <property type="term" value="P:translation"/>
    <property type="evidence" value="ECO:0007669"/>
    <property type="project" value="UniProtKB-UniRule"/>
</dbReference>
<dbReference type="Gene3D" id="3.90.1300.10">
    <property type="entry name" value="Amidase signature (AS) domain"/>
    <property type="match status" value="1"/>
</dbReference>
<dbReference type="HAMAP" id="MF_00120">
    <property type="entry name" value="GatA"/>
    <property type="match status" value="1"/>
</dbReference>
<dbReference type="InterPro" id="IPR000120">
    <property type="entry name" value="Amidase"/>
</dbReference>
<dbReference type="InterPro" id="IPR020556">
    <property type="entry name" value="Amidase_CS"/>
</dbReference>
<dbReference type="InterPro" id="IPR023631">
    <property type="entry name" value="Amidase_dom"/>
</dbReference>
<dbReference type="InterPro" id="IPR036928">
    <property type="entry name" value="AS_sf"/>
</dbReference>
<dbReference type="InterPro" id="IPR004412">
    <property type="entry name" value="GatA"/>
</dbReference>
<dbReference type="NCBIfam" id="TIGR00132">
    <property type="entry name" value="gatA"/>
    <property type="match status" value="1"/>
</dbReference>
<dbReference type="PANTHER" id="PTHR11895:SF151">
    <property type="entry name" value="GLUTAMYL-TRNA(GLN) AMIDOTRANSFERASE SUBUNIT A"/>
    <property type="match status" value="1"/>
</dbReference>
<dbReference type="PANTHER" id="PTHR11895">
    <property type="entry name" value="TRANSAMIDASE"/>
    <property type="match status" value="1"/>
</dbReference>
<dbReference type="Pfam" id="PF01425">
    <property type="entry name" value="Amidase"/>
    <property type="match status" value="1"/>
</dbReference>
<dbReference type="SUPFAM" id="SSF75304">
    <property type="entry name" value="Amidase signature (AS) enzymes"/>
    <property type="match status" value="1"/>
</dbReference>
<dbReference type="PROSITE" id="PS00571">
    <property type="entry name" value="AMIDASES"/>
    <property type="match status" value="1"/>
</dbReference>
<sequence>MELWKKSLKELSDLVKSKEVKPSEIVEAFIERKNQVEPKIKAYVTALDDLALEKAKKRDQELTKLENIPDLFGLPIAIKDNISTKDIKTTCSSKMLENFVPVYDATVIERLKSQGYVITGKTNLDEFAMGSSTENSAFFPTRNPWDLERVPGGSSGGSAAVVASGMAPASLGSDTGGSIRQPAAFCGVVGLKPTYGRVSRYGLVAFASSLDQIGPFGRTVEDVAMIMNVISGKDPKDSTSRSIPVPNYLESLNKDVKGLKIGLPKEFYTEDLNPQIKEIILNAVKQLEKEGMTAHEISLPYTKYAIETYYIIAPSEASSNLARFDGVRYGYRAKEYKNLEEMYSKTRDEGFGAEVKRRIMIGTYALSSGYYDAYYLKAQKVRTLIYQDYMNAFEKVDVIITPTTPDVAFKIGEKSNDPIQMYLSDIFTVSANMATVPALSIPCGFKDNLPVGMQIIGKPFDEETILQVAYKFQSLNDYHKRFPEV</sequence>
<organism>
    <name type="scientific">Sulfurihydrogenibium sp. (strain YO3AOP1)</name>
    <dbReference type="NCBI Taxonomy" id="436114"/>
    <lineage>
        <taxon>Bacteria</taxon>
        <taxon>Pseudomonadati</taxon>
        <taxon>Aquificota</taxon>
        <taxon>Aquificia</taxon>
        <taxon>Aquificales</taxon>
        <taxon>Hydrogenothermaceae</taxon>
        <taxon>Sulfurihydrogenibium</taxon>
    </lineage>
</organism>
<comment type="function">
    <text evidence="1">Allows the formation of correctly charged Gln-tRNA(Gln) through the transamidation of misacylated Glu-tRNA(Gln) in organisms which lack glutaminyl-tRNA synthetase. The reaction takes place in the presence of glutamine and ATP through an activated gamma-phospho-Glu-tRNA(Gln).</text>
</comment>
<comment type="catalytic activity">
    <reaction evidence="1">
        <text>L-glutamyl-tRNA(Gln) + L-glutamine + ATP + H2O = L-glutaminyl-tRNA(Gln) + L-glutamate + ADP + phosphate + H(+)</text>
        <dbReference type="Rhea" id="RHEA:17521"/>
        <dbReference type="Rhea" id="RHEA-COMP:9681"/>
        <dbReference type="Rhea" id="RHEA-COMP:9684"/>
        <dbReference type="ChEBI" id="CHEBI:15377"/>
        <dbReference type="ChEBI" id="CHEBI:15378"/>
        <dbReference type="ChEBI" id="CHEBI:29985"/>
        <dbReference type="ChEBI" id="CHEBI:30616"/>
        <dbReference type="ChEBI" id="CHEBI:43474"/>
        <dbReference type="ChEBI" id="CHEBI:58359"/>
        <dbReference type="ChEBI" id="CHEBI:78520"/>
        <dbReference type="ChEBI" id="CHEBI:78521"/>
        <dbReference type="ChEBI" id="CHEBI:456216"/>
        <dbReference type="EC" id="6.3.5.7"/>
    </reaction>
</comment>
<comment type="subunit">
    <text evidence="1">Heterotrimer of A, B and C subunits.</text>
</comment>
<comment type="similarity">
    <text evidence="1">Belongs to the amidase family. GatA subfamily.</text>
</comment>
<name>GATA_SULSY</name>